<keyword id="KW-0067">ATP-binding</keyword>
<keyword id="KW-0119">Carbohydrate metabolism</keyword>
<keyword id="KW-0418">Kinase</keyword>
<keyword id="KW-0511">Multifunctional enzyme</keyword>
<keyword id="KW-0547">Nucleotide-binding</keyword>
<keyword id="KW-0548">Nucleotidyltransferase</keyword>
<keyword id="KW-1185">Reference proteome</keyword>
<keyword id="KW-0808">Transferase</keyword>
<evidence type="ECO:0000255" key="1">
    <source>
        <dbReference type="HAMAP-Rule" id="MF_01603"/>
    </source>
</evidence>
<evidence type="ECO:0000305" key="2"/>
<gene>
    <name evidence="1" type="primary">hldE</name>
    <name type="ordered locus">Noc_2613</name>
</gene>
<comment type="function">
    <text evidence="1">Catalyzes the phosphorylation of D-glycero-D-manno-heptose 7-phosphate at the C-1 position to selectively form D-glycero-beta-D-manno-heptose-1,7-bisphosphate.</text>
</comment>
<comment type="function">
    <text evidence="1">Catalyzes the ADP transfer from ATP to D-glycero-beta-D-manno-heptose 1-phosphate, yielding ADP-D-glycero-beta-D-manno-heptose.</text>
</comment>
<comment type="catalytic activity">
    <reaction evidence="1">
        <text>D-glycero-beta-D-manno-heptose 7-phosphate + ATP = D-glycero-beta-D-manno-heptose 1,7-bisphosphate + ADP + H(+)</text>
        <dbReference type="Rhea" id="RHEA:27473"/>
        <dbReference type="ChEBI" id="CHEBI:15378"/>
        <dbReference type="ChEBI" id="CHEBI:30616"/>
        <dbReference type="ChEBI" id="CHEBI:60204"/>
        <dbReference type="ChEBI" id="CHEBI:60208"/>
        <dbReference type="ChEBI" id="CHEBI:456216"/>
        <dbReference type="EC" id="2.7.1.167"/>
    </reaction>
</comment>
<comment type="catalytic activity">
    <reaction evidence="1">
        <text>D-glycero-beta-D-manno-heptose 1-phosphate + ATP + H(+) = ADP-D-glycero-beta-D-manno-heptose + diphosphate</text>
        <dbReference type="Rhea" id="RHEA:27465"/>
        <dbReference type="ChEBI" id="CHEBI:15378"/>
        <dbReference type="ChEBI" id="CHEBI:30616"/>
        <dbReference type="ChEBI" id="CHEBI:33019"/>
        <dbReference type="ChEBI" id="CHEBI:59967"/>
        <dbReference type="ChEBI" id="CHEBI:61593"/>
        <dbReference type="EC" id="2.7.7.70"/>
    </reaction>
</comment>
<comment type="pathway">
    <text evidence="1">Nucleotide-sugar biosynthesis; ADP-L-glycero-beta-D-manno-heptose biosynthesis; ADP-L-glycero-beta-D-manno-heptose from D-glycero-beta-D-manno-heptose 7-phosphate: step 1/4.</text>
</comment>
<comment type="pathway">
    <text evidence="1">Nucleotide-sugar biosynthesis; ADP-L-glycero-beta-D-manno-heptose biosynthesis; ADP-L-glycero-beta-D-manno-heptose from D-glycero-beta-D-manno-heptose 7-phosphate: step 3/4.</text>
</comment>
<comment type="subunit">
    <text evidence="1">Homodimer.</text>
</comment>
<comment type="similarity">
    <text evidence="1">In the N-terminal section; belongs to the carbohydrate kinase PfkB family.</text>
</comment>
<comment type="similarity">
    <text evidence="1">In the C-terminal section; belongs to the cytidylyltransferase family.</text>
</comment>
<comment type="sequence caution" evidence="2">
    <conflict type="erroneous initiation">
        <sequence resource="EMBL-CDS" id="ABA59066"/>
    </conflict>
</comment>
<reference key="1">
    <citation type="journal article" date="2006" name="Appl. Environ. Microbiol.">
        <title>Complete genome sequence of the marine, chemolithoautotrophic, ammonia-oxidizing bacterium Nitrosococcus oceani ATCC 19707.</title>
        <authorList>
            <person name="Klotz M.G."/>
            <person name="Arp D.J."/>
            <person name="Chain P.S.G."/>
            <person name="El-Sheikh A.F."/>
            <person name="Hauser L.J."/>
            <person name="Hommes N.G."/>
            <person name="Larimer F.W."/>
            <person name="Malfatti S.A."/>
            <person name="Norton J.M."/>
            <person name="Poret-Peterson A.T."/>
            <person name="Vergez L.M."/>
            <person name="Ward B.B."/>
        </authorList>
    </citation>
    <scope>NUCLEOTIDE SEQUENCE [LARGE SCALE GENOMIC DNA]</scope>
    <source>
        <strain>ATCC 19707 / BCRC 17464 / JCM 30415 / NCIMB 11848 / C-107</strain>
    </source>
</reference>
<protein>
    <recommendedName>
        <fullName evidence="1">Bifunctional protein HldE</fullName>
    </recommendedName>
    <domain>
        <recommendedName>
            <fullName evidence="1">D-beta-D-heptose 7-phosphate kinase</fullName>
            <ecNumber evidence="1">2.7.1.167</ecNumber>
        </recommendedName>
        <alternativeName>
            <fullName evidence="1">D-beta-D-heptose 7-phosphotransferase</fullName>
        </alternativeName>
        <alternativeName>
            <fullName evidence="1">D-glycero-beta-D-manno-heptose-7-phosphate kinase</fullName>
        </alternativeName>
    </domain>
    <domain>
        <recommendedName>
            <fullName evidence="1">D-beta-D-heptose 1-phosphate adenylyltransferase</fullName>
            <ecNumber evidence="1">2.7.7.70</ecNumber>
        </recommendedName>
        <alternativeName>
            <fullName evidence="1">D-glycero-beta-D-manno-heptose 1-phosphate adenylyltransferase</fullName>
        </alternativeName>
    </domain>
</protein>
<name>HLDE_NITOC</name>
<feature type="chain" id="PRO_0000255770" description="Bifunctional protein HldE">
    <location>
        <begin position="1"/>
        <end position="473"/>
    </location>
</feature>
<feature type="region of interest" description="Ribokinase">
    <location>
        <begin position="1"/>
        <end position="317"/>
    </location>
</feature>
<feature type="region of interest" description="Cytidylyltransferase">
    <location>
        <begin position="343"/>
        <end position="473"/>
    </location>
</feature>
<feature type="active site" evidence="1">
    <location>
        <position position="264"/>
    </location>
</feature>
<feature type="binding site" evidence="1">
    <location>
        <begin position="195"/>
        <end position="198"/>
    </location>
    <ligand>
        <name>ATP</name>
        <dbReference type="ChEBI" id="CHEBI:30616"/>
    </ligand>
</feature>
<dbReference type="EC" id="2.7.1.167" evidence="1"/>
<dbReference type="EC" id="2.7.7.70" evidence="1"/>
<dbReference type="EMBL" id="CP000127">
    <property type="protein sequence ID" value="ABA59066.1"/>
    <property type="status" value="ALT_INIT"/>
    <property type="molecule type" value="Genomic_DNA"/>
</dbReference>
<dbReference type="SMR" id="Q3J7Y0"/>
<dbReference type="FunCoup" id="Q3J7Y0">
    <property type="interactions" value="287"/>
</dbReference>
<dbReference type="STRING" id="323261.Noc_2613"/>
<dbReference type="KEGG" id="noc:Noc_2613"/>
<dbReference type="eggNOG" id="COG0615">
    <property type="taxonomic scope" value="Bacteria"/>
</dbReference>
<dbReference type="eggNOG" id="COG2870">
    <property type="taxonomic scope" value="Bacteria"/>
</dbReference>
<dbReference type="HOGENOM" id="CLU_021150_2_1_6"/>
<dbReference type="InParanoid" id="Q3J7Y0"/>
<dbReference type="UniPathway" id="UPA00356">
    <property type="reaction ID" value="UER00437"/>
</dbReference>
<dbReference type="UniPathway" id="UPA00356">
    <property type="reaction ID" value="UER00439"/>
</dbReference>
<dbReference type="Proteomes" id="UP000006838">
    <property type="component" value="Chromosome"/>
</dbReference>
<dbReference type="GO" id="GO:0005829">
    <property type="term" value="C:cytosol"/>
    <property type="evidence" value="ECO:0007669"/>
    <property type="project" value="TreeGrafter"/>
</dbReference>
<dbReference type="GO" id="GO:0005524">
    <property type="term" value="F:ATP binding"/>
    <property type="evidence" value="ECO:0007669"/>
    <property type="project" value="UniProtKB-UniRule"/>
</dbReference>
<dbReference type="GO" id="GO:0033785">
    <property type="term" value="F:heptose 7-phosphate kinase activity"/>
    <property type="evidence" value="ECO:0007669"/>
    <property type="project" value="UniProtKB-UniRule"/>
</dbReference>
<dbReference type="GO" id="GO:0033786">
    <property type="term" value="F:heptose-1-phosphate adenylyltransferase activity"/>
    <property type="evidence" value="ECO:0007669"/>
    <property type="project" value="UniProtKB-UniRule"/>
</dbReference>
<dbReference type="GO" id="GO:0016773">
    <property type="term" value="F:phosphotransferase activity, alcohol group as acceptor"/>
    <property type="evidence" value="ECO:0007669"/>
    <property type="project" value="InterPro"/>
</dbReference>
<dbReference type="GO" id="GO:0097171">
    <property type="term" value="P:ADP-L-glycero-beta-D-manno-heptose biosynthetic process"/>
    <property type="evidence" value="ECO:0007669"/>
    <property type="project" value="UniProtKB-UniPathway"/>
</dbReference>
<dbReference type="CDD" id="cd01172">
    <property type="entry name" value="RfaE_like"/>
    <property type="match status" value="1"/>
</dbReference>
<dbReference type="FunFam" id="3.40.1190.20:FF:000002">
    <property type="entry name" value="Bifunctional protein HldE"/>
    <property type="match status" value="1"/>
</dbReference>
<dbReference type="FunFam" id="3.40.50.620:FF:000028">
    <property type="entry name" value="Bifunctional protein HldE"/>
    <property type="match status" value="1"/>
</dbReference>
<dbReference type="Gene3D" id="3.40.1190.20">
    <property type="match status" value="1"/>
</dbReference>
<dbReference type="Gene3D" id="3.40.50.620">
    <property type="entry name" value="HUPs"/>
    <property type="match status" value="1"/>
</dbReference>
<dbReference type="HAMAP" id="MF_01603">
    <property type="entry name" value="HldE"/>
    <property type="match status" value="1"/>
</dbReference>
<dbReference type="InterPro" id="IPR023030">
    <property type="entry name" value="Bifunc_HldE"/>
</dbReference>
<dbReference type="InterPro" id="IPR002173">
    <property type="entry name" value="Carboh/pur_kinase_PfkB_CS"/>
</dbReference>
<dbReference type="InterPro" id="IPR004821">
    <property type="entry name" value="Cyt_trans-like"/>
</dbReference>
<dbReference type="InterPro" id="IPR011611">
    <property type="entry name" value="PfkB_dom"/>
</dbReference>
<dbReference type="InterPro" id="IPR011913">
    <property type="entry name" value="RfaE_dom_I"/>
</dbReference>
<dbReference type="InterPro" id="IPR011914">
    <property type="entry name" value="RfaE_dom_II"/>
</dbReference>
<dbReference type="InterPro" id="IPR029056">
    <property type="entry name" value="Ribokinase-like"/>
</dbReference>
<dbReference type="InterPro" id="IPR014729">
    <property type="entry name" value="Rossmann-like_a/b/a_fold"/>
</dbReference>
<dbReference type="NCBIfam" id="TIGR00125">
    <property type="entry name" value="cyt_tran_rel"/>
    <property type="match status" value="1"/>
</dbReference>
<dbReference type="NCBIfam" id="NF008454">
    <property type="entry name" value="PRK11316.1"/>
    <property type="match status" value="1"/>
</dbReference>
<dbReference type="NCBIfam" id="TIGR02198">
    <property type="entry name" value="rfaE_dom_I"/>
    <property type="match status" value="1"/>
</dbReference>
<dbReference type="NCBIfam" id="TIGR02199">
    <property type="entry name" value="rfaE_dom_II"/>
    <property type="match status" value="1"/>
</dbReference>
<dbReference type="PANTHER" id="PTHR46969">
    <property type="entry name" value="BIFUNCTIONAL PROTEIN HLDE"/>
    <property type="match status" value="1"/>
</dbReference>
<dbReference type="PANTHER" id="PTHR46969:SF1">
    <property type="entry name" value="BIFUNCTIONAL PROTEIN HLDE"/>
    <property type="match status" value="1"/>
</dbReference>
<dbReference type="Pfam" id="PF01467">
    <property type="entry name" value="CTP_transf_like"/>
    <property type="match status" value="1"/>
</dbReference>
<dbReference type="Pfam" id="PF00294">
    <property type="entry name" value="PfkB"/>
    <property type="match status" value="1"/>
</dbReference>
<dbReference type="SUPFAM" id="SSF52374">
    <property type="entry name" value="Nucleotidylyl transferase"/>
    <property type="match status" value="1"/>
</dbReference>
<dbReference type="SUPFAM" id="SSF53613">
    <property type="entry name" value="Ribokinase-like"/>
    <property type="match status" value="1"/>
</dbReference>
<dbReference type="PROSITE" id="PS00583">
    <property type="entry name" value="PFKB_KINASES_1"/>
    <property type="match status" value="1"/>
</dbReference>
<proteinExistence type="inferred from homology"/>
<accession>Q3J7Y0</accession>
<organism>
    <name type="scientific">Nitrosococcus oceani (strain ATCC 19707 / BCRC 17464 / JCM 30415 / NCIMB 11848 / C-107)</name>
    <dbReference type="NCBI Taxonomy" id="323261"/>
    <lineage>
        <taxon>Bacteria</taxon>
        <taxon>Pseudomonadati</taxon>
        <taxon>Pseudomonadota</taxon>
        <taxon>Gammaproteobacteria</taxon>
        <taxon>Chromatiales</taxon>
        <taxon>Chromatiaceae</taxon>
        <taxon>Nitrosococcus</taxon>
    </lineage>
</organism>
<sequence length="473" mass="50621">MTHGLPHFTSAQVLVIGDVILDRYWHGTTSRISPEAPVPVVQVTGREDRPGGAGNVAVNVAALGAEVTLLGLIGADEAAAALRSLLAHRGVHCCLEGLPNIATLTKLRVISRHQQLIRLDFEDDFIPAHGEALLPAYSTALRGKSVVILSDYGKGTLQEPQRLIALGREVGVPILIDPKGADFSHYHGATIITPNLAEFEMVVGPCPDEASLVWKGEQLRQQLALKALLITRGEQGMTLLEQGHSPVHLPTEAREVFDVTGAGDTVISVLGAALAAGGTFKEATLLANQAAGIVVGKLGTASVTRDELQQALHPRAIRRGITSEEELLHFINLARSRGECIVMTNGCFDILHPGHVNYLAEARQLGDRLIVAVNDDASVQRLKGKNRPINSLAQRLTVLAALHDVDWVVPFSEDTPARLIERVLPDILVKGGDYTPEQIAGANAVVANGGKIIILTYQQGCSTSQIIDIIRKN</sequence>